<gene>
    <name evidence="1" type="primary">dapE</name>
    <name type="ordered locus">YpAngola_A3141</name>
</gene>
<proteinExistence type="inferred from homology"/>
<protein>
    <recommendedName>
        <fullName evidence="1">Succinyl-diaminopimelate desuccinylase</fullName>
        <shortName evidence="1">SDAP desuccinylase</shortName>
        <ecNumber evidence="1">3.5.1.18</ecNumber>
    </recommendedName>
    <alternativeName>
        <fullName evidence="1">N-succinyl-LL-2,6-diaminoheptanedioate amidohydrolase</fullName>
    </alternativeName>
</protein>
<keyword id="KW-0028">Amino-acid biosynthesis</keyword>
<keyword id="KW-0170">Cobalt</keyword>
<keyword id="KW-0220">Diaminopimelate biosynthesis</keyword>
<keyword id="KW-0378">Hydrolase</keyword>
<keyword id="KW-0457">Lysine biosynthesis</keyword>
<keyword id="KW-0479">Metal-binding</keyword>
<keyword id="KW-0862">Zinc</keyword>
<evidence type="ECO:0000255" key="1">
    <source>
        <dbReference type="HAMAP-Rule" id="MF_01690"/>
    </source>
</evidence>
<dbReference type="EC" id="3.5.1.18" evidence="1"/>
<dbReference type="EMBL" id="CP000901">
    <property type="protein sequence ID" value="ABX88696.1"/>
    <property type="molecule type" value="Genomic_DNA"/>
</dbReference>
<dbReference type="RefSeq" id="WP_002208549.1">
    <property type="nucleotide sequence ID" value="NZ_CP009935.1"/>
</dbReference>
<dbReference type="SMR" id="A9R2H7"/>
<dbReference type="MEROPS" id="M20.010"/>
<dbReference type="GeneID" id="57975649"/>
<dbReference type="KEGG" id="ypg:YpAngola_A3141"/>
<dbReference type="PATRIC" id="fig|349746.12.peg.4201"/>
<dbReference type="UniPathway" id="UPA00034">
    <property type="reaction ID" value="UER00021"/>
</dbReference>
<dbReference type="GO" id="GO:0008777">
    <property type="term" value="F:acetylornithine deacetylase activity"/>
    <property type="evidence" value="ECO:0007669"/>
    <property type="project" value="TreeGrafter"/>
</dbReference>
<dbReference type="GO" id="GO:0050897">
    <property type="term" value="F:cobalt ion binding"/>
    <property type="evidence" value="ECO:0007669"/>
    <property type="project" value="UniProtKB-UniRule"/>
</dbReference>
<dbReference type="GO" id="GO:0009014">
    <property type="term" value="F:succinyl-diaminopimelate desuccinylase activity"/>
    <property type="evidence" value="ECO:0007669"/>
    <property type="project" value="UniProtKB-UniRule"/>
</dbReference>
<dbReference type="GO" id="GO:0008270">
    <property type="term" value="F:zinc ion binding"/>
    <property type="evidence" value="ECO:0007669"/>
    <property type="project" value="UniProtKB-UniRule"/>
</dbReference>
<dbReference type="GO" id="GO:0019877">
    <property type="term" value="P:diaminopimelate biosynthetic process"/>
    <property type="evidence" value="ECO:0007669"/>
    <property type="project" value="UniProtKB-UniRule"/>
</dbReference>
<dbReference type="GO" id="GO:0006526">
    <property type="term" value="P:L-arginine biosynthetic process"/>
    <property type="evidence" value="ECO:0007669"/>
    <property type="project" value="TreeGrafter"/>
</dbReference>
<dbReference type="GO" id="GO:0009089">
    <property type="term" value="P:lysine biosynthetic process via diaminopimelate"/>
    <property type="evidence" value="ECO:0007669"/>
    <property type="project" value="UniProtKB-UniRule"/>
</dbReference>
<dbReference type="CDD" id="cd03891">
    <property type="entry name" value="M20_DapE_proteobac"/>
    <property type="match status" value="1"/>
</dbReference>
<dbReference type="FunFam" id="3.30.70.360:FF:000011">
    <property type="entry name" value="Succinyl-diaminopimelate desuccinylase"/>
    <property type="match status" value="1"/>
</dbReference>
<dbReference type="FunFam" id="3.40.630.10:FF:000005">
    <property type="entry name" value="Succinyl-diaminopimelate desuccinylase"/>
    <property type="match status" value="1"/>
</dbReference>
<dbReference type="FunFam" id="3.40.630.10:FF:000010">
    <property type="entry name" value="Succinyl-diaminopimelate desuccinylase"/>
    <property type="match status" value="1"/>
</dbReference>
<dbReference type="Gene3D" id="3.40.630.10">
    <property type="entry name" value="Zn peptidases"/>
    <property type="match status" value="2"/>
</dbReference>
<dbReference type="HAMAP" id="MF_01690">
    <property type="entry name" value="DapE"/>
    <property type="match status" value="1"/>
</dbReference>
<dbReference type="InterPro" id="IPR001261">
    <property type="entry name" value="ArgE/DapE_CS"/>
</dbReference>
<dbReference type="InterPro" id="IPR036264">
    <property type="entry name" value="Bact_exopeptidase_dim_dom"/>
</dbReference>
<dbReference type="InterPro" id="IPR005941">
    <property type="entry name" value="DapE_proteobac"/>
</dbReference>
<dbReference type="InterPro" id="IPR002933">
    <property type="entry name" value="Peptidase_M20"/>
</dbReference>
<dbReference type="InterPro" id="IPR011650">
    <property type="entry name" value="Peptidase_M20_dimer"/>
</dbReference>
<dbReference type="InterPro" id="IPR050072">
    <property type="entry name" value="Peptidase_M20A"/>
</dbReference>
<dbReference type="NCBIfam" id="TIGR01246">
    <property type="entry name" value="dapE_proteo"/>
    <property type="match status" value="1"/>
</dbReference>
<dbReference type="NCBIfam" id="NF009557">
    <property type="entry name" value="PRK13009.1"/>
    <property type="match status" value="1"/>
</dbReference>
<dbReference type="PANTHER" id="PTHR43808">
    <property type="entry name" value="ACETYLORNITHINE DEACETYLASE"/>
    <property type="match status" value="1"/>
</dbReference>
<dbReference type="PANTHER" id="PTHR43808:SF31">
    <property type="entry name" value="N-ACETYL-L-CITRULLINE DEACETYLASE"/>
    <property type="match status" value="1"/>
</dbReference>
<dbReference type="Pfam" id="PF07687">
    <property type="entry name" value="M20_dimer"/>
    <property type="match status" value="1"/>
</dbReference>
<dbReference type="Pfam" id="PF01546">
    <property type="entry name" value="Peptidase_M20"/>
    <property type="match status" value="1"/>
</dbReference>
<dbReference type="SUPFAM" id="SSF55031">
    <property type="entry name" value="Bacterial exopeptidase dimerisation domain"/>
    <property type="match status" value="1"/>
</dbReference>
<dbReference type="SUPFAM" id="SSF53187">
    <property type="entry name" value="Zn-dependent exopeptidases"/>
    <property type="match status" value="1"/>
</dbReference>
<dbReference type="PROSITE" id="PS00758">
    <property type="entry name" value="ARGE_DAPE_CPG2_1"/>
    <property type="match status" value="1"/>
</dbReference>
<reference key="1">
    <citation type="journal article" date="2010" name="J. Bacteriol.">
        <title>Genome sequence of the deep-rooted Yersinia pestis strain Angola reveals new insights into the evolution and pangenome of the plague bacterium.</title>
        <authorList>
            <person name="Eppinger M."/>
            <person name="Worsham P.L."/>
            <person name="Nikolich M.P."/>
            <person name="Riley D.R."/>
            <person name="Sebastian Y."/>
            <person name="Mou S."/>
            <person name="Achtman M."/>
            <person name="Lindler L.E."/>
            <person name="Ravel J."/>
        </authorList>
    </citation>
    <scope>NUCLEOTIDE SEQUENCE [LARGE SCALE GENOMIC DNA]</scope>
    <source>
        <strain>Angola</strain>
    </source>
</reference>
<sequence length="375" mass="40933">MICPVIELAQQLIKRPSLSPSDAGCQEIMIQRLAAIGFTIEPMNFGDTLNFWAWRGEGETLAFAGHTDVVPTGDESHWHSPPFEPTIRDGMLYGRGAADMKGSLAAMIVAAERFVAAHPDHKGRLAFMITSDEEAKATNGTVKVVEALMARHERLDYCLVGEPSSTDRVGDIVKNGRRGSITANLRIHGVQGHVAYPHLADNPVHRAMPALNELVATQWDEGNAFFPATSMQIANLQAGTGSNNVIPGEFYVQFNFRFSTELTDSLIKQRVAALLDRHQLDYTLEWVLSGQPFLTAKGALVDAVVNAVKHYTEITPQLLTTGGTSDGRFIALMGAQVVELGPVNATIHKVNECVSAADLQLLSRMYQKIMEQLIA</sequence>
<organism>
    <name type="scientific">Yersinia pestis bv. Antiqua (strain Angola)</name>
    <dbReference type="NCBI Taxonomy" id="349746"/>
    <lineage>
        <taxon>Bacteria</taxon>
        <taxon>Pseudomonadati</taxon>
        <taxon>Pseudomonadota</taxon>
        <taxon>Gammaproteobacteria</taxon>
        <taxon>Enterobacterales</taxon>
        <taxon>Yersiniaceae</taxon>
        <taxon>Yersinia</taxon>
    </lineage>
</organism>
<comment type="function">
    <text evidence="1">Catalyzes the hydrolysis of N-succinyl-L,L-diaminopimelic acid (SDAP), forming succinate and LL-2,6-diaminopimelate (DAP), an intermediate involved in the bacterial biosynthesis of lysine and meso-diaminopimelic acid, an essential component of bacterial cell walls.</text>
</comment>
<comment type="catalytic activity">
    <reaction evidence="1">
        <text>N-succinyl-(2S,6S)-2,6-diaminopimelate + H2O = (2S,6S)-2,6-diaminopimelate + succinate</text>
        <dbReference type="Rhea" id="RHEA:22608"/>
        <dbReference type="ChEBI" id="CHEBI:15377"/>
        <dbReference type="ChEBI" id="CHEBI:30031"/>
        <dbReference type="ChEBI" id="CHEBI:57609"/>
        <dbReference type="ChEBI" id="CHEBI:58087"/>
        <dbReference type="EC" id="3.5.1.18"/>
    </reaction>
</comment>
<comment type="cofactor">
    <cofactor evidence="1">
        <name>Zn(2+)</name>
        <dbReference type="ChEBI" id="CHEBI:29105"/>
    </cofactor>
    <cofactor evidence="1">
        <name>Co(2+)</name>
        <dbReference type="ChEBI" id="CHEBI:48828"/>
    </cofactor>
    <text evidence="1">Binds 2 Zn(2+) or Co(2+) ions per subunit.</text>
</comment>
<comment type="pathway">
    <text evidence="1">Amino-acid biosynthesis; L-lysine biosynthesis via DAP pathway; LL-2,6-diaminopimelate from (S)-tetrahydrodipicolinate (succinylase route): step 3/3.</text>
</comment>
<comment type="subunit">
    <text evidence="1">Homodimer.</text>
</comment>
<comment type="similarity">
    <text evidence="1">Belongs to the peptidase M20A family. DapE subfamily.</text>
</comment>
<name>DAPE_YERPG</name>
<accession>A9R2H7</accession>
<feature type="chain" id="PRO_0000375796" description="Succinyl-diaminopimelate desuccinylase">
    <location>
        <begin position="1"/>
        <end position="375"/>
    </location>
</feature>
<feature type="active site" evidence="1">
    <location>
        <position position="68"/>
    </location>
</feature>
<feature type="active site" description="Proton acceptor" evidence="1">
    <location>
        <position position="133"/>
    </location>
</feature>
<feature type="binding site" evidence="1">
    <location>
        <position position="66"/>
    </location>
    <ligand>
        <name>Zn(2+)</name>
        <dbReference type="ChEBI" id="CHEBI:29105"/>
        <label>1</label>
    </ligand>
</feature>
<feature type="binding site" evidence="1">
    <location>
        <position position="99"/>
    </location>
    <ligand>
        <name>Zn(2+)</name>
        <dbReference type="ChEBI" id="CHEBI:29105"/>
        <label>1</label>
    </ligand>
</feature>
<feature type="binding site" evidence="1">
    <location>
        <position position="99"/>
    </location>
    <ligand>
        <name>Zn(2+)</name>
        <dbReference type="ChEBI" id="CHEBI:29105"/>
        <label>2</label>
    </ligand>
</feature>
<feature type="binding site" evidence="1">
    <location>
        <position position="134"/>
    </location>
    <ligand>
        <name>Zn(2+)</name>
        <dbReference type="ChEBI" id="CHEBI:29105"/>
        <label>2</label>
    </ligand>
</feature>
<feature type="binding site" evidence="1">
    <location>
        <position position="162"/>
    </location>
    <ligand>
        <name>Zn(2+)</name>
        <dbReference type="ChEBI" id="CHEBI:29105"/>
        <label>1</label>
    </ligand>
</feature>
<feature type="binding site" evidence="1">
    <location>
        <position position="348"/>
    </location>
    <ligand>
        <name>Zn(2+)</name>
        <dbReference type="ChEBI" id="CHEBI:29105"/>
        <label>2</label>
    </ligand>
</feature>